<accession>C5PEI5</accession>
<feature type="chain" id="PRO_0000405888" description="Phosphatidylethanolamine N-methyltransferase">
    <location>
        <begin position="1"/>
        <end position="963"/>
    </location>
</feature>
<feature type="topological domain" description="Lumenal" evidence="1">
    <location>
        <begin position="1"/>
        <end position="85"/>
    </location>
</feature>
<feature type="transmembrane region" description="Helical" evidence="1">
    <location>
        <begin position="86"/>
        <end position="106"/>
    </location>
</feature>
<feature type="topological domain" description="Cytoplasmic" evidence="1">
    <location>
        <begin position="107"/>
        <end position="109"/>
    </location>
</feature>
<feature type="transmembrane region" description="Helical" evidence="1">
    <location>
        <begin position="110"/>
        <end position="130"/>
    </location>
</feature>
<feature type="topological domain" description="Lumenal" evidence="1">
    <location>
        <begin position="131"/>
        <end position="195"/>
    </location>
</feature>
<feature type="transmembrane region" description="Helical" evidence="1">
    <location>
        <begin position="196"/>
        <end position="216"/>
    </location>
</feature>
<feature type="topological domain" description="Cytoplasmic" evidence="1">
    <location>
        <begin position="217"/>
        <end position="223"/>
    </location>
</feature>
<feature type="transmembrane region" description="Helical" evidence="1">
    <location>
        <begin position="224"/>
        <end position="244"/>
    </location>
</feature>
<feature type="topological domain" description="Lumenal" evidence="1">
    <location>
        <begin position="245"/>
        <end position="277"/>
    </location>
</feature>
<feature type="transmembrane region" description="Helical" evidence="1">
    <location>
        <begin position="278"/>
        <end position="298"/>
    </location>
</feature>
<feature type="topological domain" description="Cytoplasmic" evidence="1">
    <location>
        <begin position="299"/>
        <end position="300"/>
    </location>
</feature>
<feature type="transmembrane region" description="Helical" evidence="1">
    <location>
        <begin position="301"/>
        <end position="321"/>
    </location>
</feature>
<feature type="topological domain" description="Lumenal" evidence="1">
    <location>
        <begin position="322"/>
        <end position="387"/>
    </location>
</feature>
<feature type="transmembrane region" description="Helical" evidence="1">
    <location>
        <begin position="388"/>
        <end position="408"/>
    </location>
</feature>
<feature type="topological domain" description="Cytoplasmic" evidence="1">
    <location>
        <begin position="409"/>
        <end position="414"/>
    </location>
</feature>
<feature type="transmembrane region" description="Helical" evidence="1">
    <location>
        <begin position="415"/>
        <end position="435"/>
    </location>
</feature>
<feature type="topological domain" description="Lumenal" evidence="1">
    <location>
        <begin position="436"/>
        <end position="464"/>
    </location>
</feature>
<feature type="transmembrane region" description="Helical" evidence="1">
    <location>
        <begin position="465"/>
        <end position="487"/>
    </location>
</feature>
<feature type="topological domain" description="Cytoplasmic" evidence="1">
    <location>
        <begin position="488"/>
        <end position="491"/>
    </location>
</feature>
<feature type="transmembrane region" description="Helical" evidence="1">
    <location>
        <begin position="492"/>
        <end position="512"/>
    </location>
</feature>
<feature type="topological domain" description="Lumenal" evidence="1">
    <location>
        <begin position="513"/>
        <end position="571"/>
    </location>
</feature>
<feature type="transmembrane region" description="Helical" evidence="1">
    <location>
        <begin position="572"/>
        <end position="592"/>
    </location>
</feature>
<feature type="topological domain" description="Cytoplasmic" evidence="1">
    <location>
        <begin position="593"/>
        <end position="963"/>
    </location>
</feature>
<feature type="region of interest" description="Disordered" evidence="2">
    <location>
        <begin position="1"/>
        <end position="59"/>
    </location>
</feature>
<feature type="region of interest" description="Disordered" evidence="2">
    <location>
        <begin position="349"/>
        <end position="373"/>
    </location>
</feature>
<feature type="compositionally biased region" description="Basic and acidic residues" evidence="2">
    <location>
        <begin position="38"/>
        <end position="52"/>
    </location>
</feature>
<feature type="compositionally biased region" description="Polar residues" evidence="2">
    <location>
        <begin position="352"/>
        <end position="373"/>
    </location>
</feature>
<proteinExistence type="inferred from homology"/>
<name>CHO2_COCP7</name>
<comment type="function">
    <text evidence="1">Catalyzes the first step of the methylation pathway of phosphatidylcholine biosynthesis, the SAM-dependent methylation of phosphatidylethanolamine (PE) to phosphatidylmonomethylethanolamine (PMME).</text>
</comment>
<comment type="catalytic activity">
    <reaction evidence="1">
        <text>a 1,2-diacyl-sn-glycero-3-phosphoethanolamine + S-adenosyl-L-methionine = a 1,2-diacyl-sn-glycero-3-phospho-N-methylethanolamine + S-adenosyl-L-homocysteine + H(+)</text>
        <dbReference type="Rhea" id="RHEA:11164"/>
        <dbReference type="ChEBI" id="CHEBI:15378"/>
        <dbReference type="ChEBI" id="CHEBI:57856"/>
        <dbReference type="ChEBI" id="CHEBI:59789"/>
        <dbReference type="ChEBI" id="CHEBI:64573"/>
        <dbReference type="ChEBI" id="CHEBI:64612"/>
        <dbReference type="EC" id="2.1.1.17"/>
    </reaction>
</comment>
<comment type="pathway">
    <text evidence="1">Phospholipid metabolism; phosphatidylcholine biosynthesis.</text>
</comment>
<comment type="subcellular location">
    <subcellularLocation>
        <location evidence="1">Endoplasmic reticulum membrane</location>
        <topology evidence="1">Multi-pass membrane protein</topology>
    </subcellularLocation>
</comment>
<comment type="similarity">
    <text evidence="1">Belongs to the class VI-like SAM-binding methyltransferase superfamily. CHO2 family.</text>
</comment>
<protein>
    <recommendedName>
        <fullName evidence="1">Phosphatidylethanolamine N-methyltransferase</fullName>
        <shortName evidence="1">PE methyltransferase</shortName>
        <shortName evidence="1">PEAMT</shortName>
        <shortName evidence="1">PEMT</shortName>
        <ecNumber evidence="1">2.1.1.17</ecNumber>
    </recommendedName>
</protein>
<reference key="1">
    <citation type="journal article" date="2009" name="Genome Res.">
        <title>Comparative genomic analyses of the human fungal pathogens Coccidioides and their relatives.</title>
        <authorList>
            <person name="Sharpton T.J."/>
            <person name="Stajich J.E."/>
            <person name="Rounsley S.D."/>
            <person name="Gardner M.J."/>
            <person name="Wortman J.R."/>
            <person name="Jordar V.S."/>
            <person name="Maiti R."/>
            <person name="Kodira C.D."/>
            <person name="Neafsey D.E."/>
            <person name="Zeng Q."/>
            <person name="Hung C.-Y."/>
            <person name="McMahan C."/>
            <person name="Muszewska A."/>
            <person name="Grynberg M."/>
            <person name="Mandel M.A."/>
            <person name="Kellner E.M."/>
            <person name="Barker B.M."/>
            <person name="Galgiani J.N."/>
            <person name="Orbach M.J."/>
            <person name="Kirkland T.N."/>
            <person name="Cole G.T."/>
            <person name="Henn M.R."/>
            <person name="Birren B.W."/>
            <person name="Taylor J.W."/>
        </authorList>
    </citation>
    <scope>NUCLEOTIDE SEQUENCE [LARGE SCALE GENOMIC DNA]</scope>
    <source>
        <strain>C735</strain>
    </source>
</reference>
<gene>
    <name type="primary">CHO2</name>
    <name type="ORF">CPC735_058750</name>
</gene>
<dbReference type="EC" id="2.1.1.17" evidence="1"/>
<dbReference type="EMBL" id="ACFW01000049">
    <property type="protein sequence ID" value="EER24505.1"/>
    <property type="molecule type" value="Genomic_DNA"/>
</dbReference>
<dbReference type="RefSeq" id="XP_003066650.1">
    <property type="nucleotide sequence ID" value="XM_003066604.1"/>
</dbReference>
<dbReference type="SMR" id="C5PEI5"/>
<dbReference type="GeneID" id="9692120"/>
<dbReference type="KEGG" id="cpw:9692120"/>
<dbReference type="VEuPathDB" id="FungiDB:CPC735_058750"/>
<dbReference type="HOGENOM" id="CLU_005987_0_0_1"/>
<dbReference type="OrthoDB" id="4583at2759"/>
<dbReference type="UniPathway" id="UPA00753"/>
<dbReference type="Proteomes" id="UP000009084">
    <property type="component" value="Unassembled WGS sequence"/>
</dbReference>
<dbReference type="GO" id="GO:0005789">
    <property type="term" value="C:endoplasmic reticulum membrane"/>
    <property type="evidence" value="ECO:0007669"/>
    <property type="project" value="UniProtKB-SubCell"/>
</dbReference>
<dbReference type="GO" id="GO:0004608">
    <property type="term" value="F:phosphatidylethanolamine N-methyltransferase activity"/>
    <property type="evidence" value="ECO:0007669"/>
    <property type="project" value="UniProtKB-UniRule"/>
</dbReference>
<dbReference type="GO" id="GO:0032259">
    <property type="term" value="P:methylation"/>
    <property type="evidence" value="ECO:0007669"/>
    <property type="project" value="UniProtKB-KW"/>
</dbReference>
<dbReference type="GO" id="GO:0006656">
    <property type="term" value="P:phosphatidylcholine biosynthetic process"/>
    <property type="evidence" value="ECO:0007669"/>
    <property type="project" value="UniProtKB-UniRule"/>
</dbReference>
<dbReference type="FunFam" id="2.60.40.2840:FF:000006">
    <property type="entry name" value="Phosphatidylethanolamine N-methyltransferase"/>
    <property type="match status" value="1"/>
</dbReference>
<dbReference type="Gene3D" id="2.60.40.2840">
    <property type="match status" value="1"/>
</dbReference>
<dbReference type="HAMAP" id="MF_03217">
    <property type="entry name" value="PEMT"/>
    <property type="match status" value="1"/>
</dbReference>
<dbReference type="InterPro" id="IPR007318">
    <property type="entry name" value="Phopholipid_MeTrfase"/>
</dbReference>
<dbReference type="InterPro" id="IPR016219">
    <property type="entry name" value="Phosphatid-EA_MeTrfase_fun"/>
</dbReference>
<dbReference type="PANTHER" id="PTHR32138">
    <property type="entry name" value="PHOSPHATIDYLETHANOLAMINE N-METHYLTRANSFERASE"/>
    <property type="match status" value="1"/>
</dbReference>
<dbReference type="PANTHER" id="PTHR32138:SF0">
    <property type="entry name" value="PHOSPHATIDYLETHANOLAMINE N-METHYLTRANSFERASE"/>
    <property type="match status" value="1"/>
</dbReference>
<dbReference type="Pfam" id="PF04191">
    <property type="entry name" value="PEMT"/>
    <property type="match status" value="2"/>
</dbReference>
<dbReference type="PIRSF" id="PIRSF000383">
    <property type="entry name" value="PEAMT"/>
    <property type="match status" value="1"/>
</dbReference>
<dbReference type="PROSITE" id="PS51598">
    <property type="entry name" value="SAM_CHO2"/>
    <property type="match status" value="1"/>
</dbReference>
<evidence type="ECO:0000255" key="1">
    <source>
        <dbReference type="HAMAP-Rule" id="MF_03217"/>
    </source>
</evidence>
<evidence type="ECO:0000256" key="2">
    <source>
        <dbReference type="SAM" id="MobiDB-lite"/>
    </source>
</evidence>
<keyword id="KW-0256">Endoplasmic reticulum</keyword>
<keyword id="KW-0444">Lipid biosynthesis</keyword>
<keyword id="KW-0443">Lipid metabolism</keyword>
<keyword id="KW-0472">Membrane</keyword>
<keyword id="KW-0489">Methyltransferase</keyword>
<keyword id="KW-0594">Phospholipid biosynthesis</keyword>
<keyword id="KW-1208">Phospholipid metabolism</keyword>
<keyword id="KW-0949">S-adenosyl-L-methionine</keyword>
<keyword id="KW-0808">Transferase</keyword>
<keyword id="KW-0812">Transmembrane</keyword>
<keyword id="KW-1133">Transmembrane helix</keyword>
<organism>
    <name type="scientific">Coccidioides posadasii (strain C735)</name>
    <name type="common">Valley fever fungus</name>
    <dbReference type="NCBI Taxonomy" id="222929"/>
    <lineage>
        <taxon>Eukaryota</taxon>
        <taxon>Fungi</taxon>
        <taxon>Dikarya</taxon>
        <taxon>Ascomycota</taxon>
        <taxon>Pezizomycotina</taxon>
        <taxon>Eurotiomycetes</taxon>
        <taxon>Eurotiomycetidae</taxon>
        <taxon>Onygenales</taxon>
        <taxon>Onygenaceae</taxon>
        <taxon>Coccidioides</taxon>
    </lineage>
</organism>
<sequence length="963" mass="108959">MAEAPAVPMGGAGLRERKIQASRTQEPSPPPDSLMSKMRTDESSKIESENKTFGRTPDGTVFTVPHTRDMVSQLLSPSEPKNLSDILVLTILALHILLLRSLPASIRIPVFAVIFLSWRAAYNIGIGWLLHMQSNHRTLVLWARKLRLFVDPATGQNPHPLLYRFIKRELETKIPEHYTFESAPIEYNTWLVFRRVVDLILMCDFTSYCLFAVACGSRPIGEGLFVMMLRWLAGTSLVLFNLWVKLDAHRVVKDFAWYWGDFFYLIDQDLTFDGVFEMAPHPMYSVGYAGYYGISLMAASYKVLFISILAHAAQFAFLVLVENPHIEKTYNAPPPRKRVVDHDTALHEDVGSRSNSFNSDTTPPLPVPSTTQPRSTHALVGSMDVHRVTDVSVLLIHLLFFALTIITPSTPAYQFFFVLNAAVWRIWYSAGIGYILDRQSTRKSWTRHFVKFGEGQDEAWRQWKGIYHLSMTTCYASFIAAAWKMYTLPQDWGYGLAILRHVLGASLIALQIWTSMSIYESLGEFGWFFGDFFYDESPKLTYSGIYRFLNNPERVLGLAGVWGAVLITNSRAMIFLALLSHTLSIAFIQLVERPHMQKLYGRSLRRDAGLVKSIKRSLPNSLKQFQGSVDKILDESIEFVEEVIDTARPKLAAGVNTFVKDTTALLHKYPARITITRLEPDLAGYEMKDYSLTVEGTQLAQFDKSTDATNNKSRNSRRSEDLVLEYGAPIKVKWTAPLNHSKKDWIGLYMVTHNSSREITKVSSQGRWIATNEGAFDSLTSEVGLKSSDVIIKYTGNDNDKTREVASGEIIFSGEKLWWNQGVFEFRYHHNGKHNVMAISRPFEIRIAKFDENEIPLDNYAVVRPAIEGALLPIIQNCLDRDPDIAPQNAEEAFGSQVDRDSKYTKRVVFAVQHMFGIEFAPEVVSADGNVRNLAWRICNAKKVLAPYSMSRASGATTPVQED</sequence>